<name>MURG_STRP4</name>
<gene>
    <name evidence="1" type="primary">murG</name>
    <name type="ordered locus">SPG_0629</name>
</gene>
<keyword id="KW-0131">Cell cycle</keyword>
<keyword id="KW-0132">Cell division</keyword>
<keyword id="KW-1003">Cell membrane</keyword>
<keyword id="KW-0133">Cell shape</keyword>
<keyword id="KW-0961">Cell wall biogenesis/degradation</keyword>
<keyword id="KW-0328">Glycosyltransferase</keyword>
<keyword id="KW-0472">Membrane</keyword>
<keyword id="KW-0573">Peptidoglycan synthesis</keyword>
<keyword id="KW-0808">Transferase</keyword>
<dbReference type="EC" id="2.4.1.227" evidence="1"/>
<dbReference type="EMBL" id="AF068902">
    <property type="protein sequence ID" value="AAC95450.1"/>
    <property type="molecule type" value="Genomic_DNA"/>
</dbReference>
<dbReference type="EMBL" id="CP001015">
    <property type="protein sequence ID" value="ACF56775.1"/>
    <property type="molecule type" value="Genomic_DNA"/>
</dbReference>
<dbReference type="SMR" id="B5E2Z9"/>
<dbReference type="CAZy" id="GT28">
    <property type="family name" value="Glycosyltransferase Family 28"/>
</dbReference>
<dbReference type="KEGG" id="spx:SPG_0629"/>
<dbReference type="HOGENOM" id="CLU_037404_0_0_9"/>
<dbReference type="UniPathway" id="UPA00219"/>
<dbReference type="GO" id="GO:0005886">
    <property type="term" value="C:plasma membrane"/>
    <property type="evidence" value="ECO:0007669"/>
    <property type="project" value="UniProtKB-SubCell"/>
</dbReference>
<dbReference type="GO" id="GO:0050511">
    <property type="term" value="F:undecaprenyldiphospho-muramoylpentapeptide beta-N-acetylglucosaminyltransferase activity"/>
    <property type="evidence" value="ECO:0007669"/>
    <property type="project" value="UniProtKB-UniRule"/>
</dbReference>
<dbReference type="GO" id="GO:0005975">
    <property type="term" value="P:carbohydrate metabolic process"/>
    <property type="evidence" value="ECO:0007669"/>
    <property type="project" value="InterPro"/>
</dbReference>
<dbReference type="GO" id="GO:0051301">
    <property type="term" value="P:cell division"/>
    <property type="evidence" value="ECO:0007669"/>
    <property type="project" value="UniProtKB-KW"/>
</dbReference>
<dbReference type="GO" id="GO:0071555">
    <property type="term" value="P:cell wall organization"/>
    <property type="evidence" value="ECO:0007669"/>
    <property type="project" value="UniProtKB-KW"/>
</dbReference>
<dbReference type="GO" id="GO:0030259">
    <property type="term" value="P:lipid glycosylation"/>
    <property type="evidence" value="ECO:0007669"/>
    <property type="project" value="UniProtKB-UniRule"/>
</dbReference>
<dbReference type="GO" id="GO:0009252">
    <property type="term" value="P:peptidoglycan biosynthetic process"/>
    <property type="evidence" value="ECO:0007669"/>
    <property type="project" value="UniProtKB-UniRule"/>
</dbReference>
<dbReference type="GO" id="GO:0008360">
    <property type="term" value="P:regulation of cell shape"/>
    <property type="evidence" value="ECO:0007669"/>
    <property type="project" value="UniProtKB-KW"/>
</dbReference>
<dbReference type="CDD" id="cd03785">
    <property type="entry name" value="GT28_MurG"/>
    <property type="match status" value="1"/>
</dbReference>
<dbReference type="Gene3D" id="3.40.50.2000">
    <property type="entry name" value="Glycogen Phosphorylase B"/>
    <property type="match status" value="2"/>
</dbReference>
<dbReference type="HAMAP" id="MF_00033">
    <property type="entry name" value="MurG"/>
    <property type="match status" value="1"/>
</dbReference>
<dbReference type="InterPro" id="IPR006009">
    <property type="entry name" value="GlcNAc_MurG"/>
</dbReference>
<dbReference type="InterPro" id="IPR007235">
    <property type="entry name" value="Glyco_trans_28_C"/>
</dbReference>
<dbReference type="InterPro" id="IPR004276">
    <property type="entry name" value="GlycoTrans_28_N"/>
</dbReference>
<dbReference type="PANTHER" id="PTHR21015:SF27">
    <property type="entry name" value="UDP-N-ACETYLGLUCOSAMINE--N-ACETYLMURAMYL-(PENTAPEPTIDE) PYROPHOSPHORYL-UNDECAPRENOL N-ACETYLGLUCOSAMINE TRANSFERASE"/>
    <property type="match status" value="1"/>
</dbReference>
<dbReference type="PANTHER" id="PTHR21015">
    <property type="entry name" value="UDP-N-ACETYLGLUCOSAMINE--N-ACETYLMURAMYL-(PENTAPEPTIDE) PYROPHOSPHORYL-UNDECAPRENOL N-ACETYLGLUCOSAMINE TRANSFERASE 1"/>
    <property type="match status" value="1"/>
</dbReference>
<dbReference type="Pfam" id="PF04101">
    <property type="entry name" value="Glyco_tran_28_C"/>
    <property type="match status" value="1"/>
</dbReference>
<dbReference type="Pfam" id="PF03033">
    <property type="entry name" value="Glyco_transf_28"/>
    <property type="match status" value="1"/>
</dbReference>
<dbReference type="SUPFAM" id="SSF53756">
    <property type="entry name" value="UDP-Glycosyltransferase/glycogen phosphorylase"/>
    <property type="match status" value="1"/>
</dbReference>
<reference key="1">
    <citation type="journal article" date="1998" name="Microbiology">
        <title>Unconventional organization of the division and cell wall gene cluster of Streptococcus pneumoniae.</title>
        <authorList>
            <person name="Massidda O."/>
            <person name="Anderluzzi D."/>
            <person name="Friedli L."/>
            <person name="Feger G."/>
        </authorList>
    </citation>
    <scope>NUCLEOTIDE SEQUENCE [GENOMIC DNA]</scope>
</reference>
<reference key="2">
    <citation type="journal article" date="2001" name="Microb. Drug Resist.">
        <title>Annotated draft genomic sequence from a Streptococcus pneumoniae type 19F clinical isolate.</title>
        <authorList>
            <person name="Dopazo J."/>
            <person name="Mendoza A."/>
            <person name="Herrero J."/>
            <person name="Caldara F."/>
            <person name="Humbert Y."/>
            <person name="Friedli L."/>
            <person name="Guerrier M."/>
            <person name="Grand-Schenk E."/>
            <person name="Gandin C."/>
            <person name="de Francesco M."/>
            <person name="Polissi A."/>
            <person name="Buell G."/>
            <person name="Feger G."/>
            <person name="Garcia E."/>
            <person name="Peitsch M."/>
            <person name="Garcia-Bustos J.F."/>
        </authorList>
    </citation>
    <scope>NUCLEOTIDE SEQUENCE [LARGE SCALE GENOMIC DNA]</scope>
    <source>
        <strain>G54</strain>
    </source>
</reference>
<reference key="3">
    <citation type="submission" date="2008-03" db="EMBL/GenBank/DDBJ databases">
        <title>Pneumococcal beta glucoside metabolism investigated by whole genome comparison.</title>
        <authorList>
            <person name="Mulas L."/>
            <person name="Trappetti C."/>
            <person name="Hakenbeck R."/>
            <person name="Iannelli F."/>
            <person name="Pozzi G."/>
            <person name="Davidsen T.M."/>
            <person name="Tettelin H."/>
            <person name="Oggioni M."/>
        </authorList>
    </citation>
    <scope>NUCLEOTIDE SEQUENCE [LARGE SCALE GENOMIC DNA]</scope>
    <source>
        <strain>G54</strain>
    </source>
</reference>
<protein>
    <recommendedName>
        <fullName evidence="1">UDP-N-acetylglucosamine--N-acetylmuramyl-(pentapeptide) pyrophosphoryl-undecaprenol N-acetylglucosamine transferase</fullName>
        <ecNumber evidence="1">2.4.1.227</ecNumber>
    </recommendedName>
    <alternativeName>
        <fullName evidence="1">Undecaprenyl-PP-MurNAc-pentapeptide-UDPGlcNAc GlcNAc transferase</fullName>
    </alternativeName>
</protein>
<evidence type="ECO:0000255" key="1">
    <source>
        <dbReference type="HAMAP-Rule" id="MF_00033"/>
    </source>
</evidence>
<comment type="function">
    <text evidence="1">Cell wall formation. Catalyzes the transfer of a GlcNAc subunit on undecaprenyl-pyrophosphoryl-MurNAc-pentapeptide (lipid intermediate I) to form undecaprenyl-pyrophosphoryl-MurNAc-(pentapeptide)GlcNAc (lipid intermediate II).</text>
</comment>
<comment type="catalytic activity">
    <reaction evidence="1">
        <text>Mur2Ac(oyl-L-Ala-gamma-D-Glu-L-Lys-D-Ala-D-Ala)-di-trans,octa-cis-undecaprenyl diphosphate + UDP-N-acetyl-alpha-D-glucosamine = beta-D-GlcNAc-(1-&gt;4)-Mur2Ac(oyl-L-Ala-gamma-D-Glu-L-Lys-D-Ala-D-Ala)-di-trans,octa-cis-undecaprenyl diphosphate + UDP + H(+)</text>
        <dbReference type="Rhea" id="RHEA:23192"/>
        <dbReference type="ChEBI" id="CHEBI:15378"/>
        <dbReference type="ChEBI" id="CHEBI:57705"/>
        <dbReference type="ChEBI" id="CHEBI:58223"/>
        <dbReference type="ChEBI" id="CHEBI:60032"/>
        <dbReference type="ChEBI" id="CHEBI:60033"/>
        <dbReference type="EC" id="2.4.1.227"/>
    </reaction>
</comment>
<comment type="pathway">
    <text evidence="1">Cell wall biogenesis; peptidoglycan biosynthesis.</text>
</comment>
<comment type="subcellular location">
    <subcellularLocation>
        <location evidence="1">Cell membrane</location>
        <topology evidence="1">Peripheral membrane protein</topology>
        <orientation evidence="1">Cytoplasmic side</orientation>
    </subcellularLocation>
</comment>
<comment type="similarity">
    <text evidence="1">Belongs to the glycosyltransferase 28 family. MurG subfamily.</text>
</comment>
<accession>B5E2Z9</accession>
<accession>Q9ZHA9</accession>
<organism>
    <name type="scientific">Streptococcus pneumoniae serotype 19F (strain G54)</name>
    <dbReference type="NCBI Taxonomy" id="512566"/>
    <lineage>
        <taxon>Bacteria</taxon>
        <taxon>Bacillati</taxon>
        <taxon>Bacillota</taxon>
        <taxon>Bacilli</taxon>
        <taxon>Lactobacillales</taxon>
        <taxon>Streptococcaceae</taxon>
        <taxon>Streptococcus</taxon>
    </lineage>
</organism>
<proteinExistence type="inferred from homology"/>
<feature type="chain" id="PRO_1000090476" description="UDP-N-acetylglucosamine--N-acetylmuramyl-(pentapeptide) pyrophosphoryl-undecaprenol N-acetylglucosamine transferase">
    <location>
        <begin position="1"/>
        <end position="352"/>
    </location>
</feature>
<feature type="binding site" evidence="1">
    <location>
        <position position="195"/>
    </location>
    <ligand>
        <name>UDP-N-acetyl-alpha-D-glucosamine</name>
        <dbReference type="ChEBI" id="CHEBI:57705"/>
    </ligand>
</feature>
<feature type="binding site" evidence="1">
    <location>
        <position position="287"/>
    </location>
    <ligand>
        <name>UDP-N-acetyl-alpha-D-glucosamine</name>
        <dbReference type="ChEBI" id="CHEBI:57705"/>
    </ligand>
</feature>
<sequence length="352" mass="39480">MKKIVFTGGGTVGHVTLNLLLMPKFIEDGWEVHYIGDKRGIEHQEILKSGLDVTFHSIATGKLRRYFSWQNMLDVFKVCWGIVQSLFIMLRLRPQTLFSKGGFVSVPPVIAARVSGVPVFIHESDLSMGLANKIAYKFATKMYSTFEQASSLSKVEHVGAVTKVSDQKNPEPDELVDIQSHFNHKLPTVLFVGGSAGARVFNQLVTDHKKELTERYNIINLTGDSSLNELSQNLFRVDYVTDLYQPLMELADIVVTRGGANTIFELLAIAKLHVIVPLGREASRGDQLENAAYFVKKGYAEDLQESDLTLDSLEEKLSHLLSHKEDYQAKMKASKELKSLADFYQLLKKDLS</sequence>